<dbReference type="EMBL" id="CP017628">
    <property type="protein sequence ID" value="AOW30022.1"/>
    <property type="molecule type" value="Genomic_DNA"/>
</dbReference>
<dbReference type="RefSeq" id="XP_711322.2">
    <property type="nucleotide sequence ID" value="XM_706230.2"/>
</dbReference>
<dbReference type="SMR" id="Q59NN8"/>
<dbReference type="FunCoup" id="Q59NN8">
    <property type="interactions" value="211"/>
</dbReference>
<dbReference type="STRING" id="237561.Q59NN8"/>
<dbReference type="EnsemblFungi" id="C6_00760W_A-T">
    <property type="protein sequence ID" value="C6_00760W_A-T-p1"/>
    <property type="gene ID" value="C6_00760W_A"/>
</dbReference>
<dbReference type="GeneID" id="3647080"/>
<dbReference type="KEGG" id="cal:CAALFM_C600760WA"/>
<dbReference type="CGD" id="CAL0000195916">
    <property type="gene designation" value="orf19.11133"/>
</dbReference>
<dbReference type="VEuPathDB" id="FungiDB:C6_00760W_A"/>
<dbReference type="HOGENOM" id="CLU_046722_1_0_1"/>
<dbReference type="InParanoid" id="Q59NN8"/>
<dbReference type="OMA" id="LHWSIAN"/>
<dbReference type="OrthoDB" id="10250458at2759"/>
<dbReference type="PRO" id="PR:Q59NN8"/>
<dbReference type="Proteomes" id="UP000000559">
    <property type="component" value="Chromosome 6"/>
</dbReference>
<dbReference type="GO" id="GO:0005829">
    <property type="term" value="C:cytosol"/>
    <property type="evidence" value="ECO:0007669"/>
    <property type="project" value="EnsemblFungi"/>
</dbReference>
<dbReference type="GO" id="GO:0005783">
    <property type="term" value="C:endoplasmic reticulum"/>
    <property type="evidence" value="ECO:0000318"/>
    <property type="project" value="GO_Central"/>
</dbReference>
<dbReference type="GO" id="GO:0000774">
    <property type="term" value="F:adenyl-nucleotide exchange factor activity"/>
    <property type="evidence" value="ECO:0000318"/>
    <property type="project" value="GO_Central"/>
</dbReference>
<dbReference type="GO" id="GO:0071629">
    <property type="term" value="P:cytoplasm protein quality control by the ubiquitin-proteasome system"/>
    <property type="evidence" value="ECO:0007669"/>
    <property type="project" value="EnsemblFungi"/>
</dbReference>
<dbReference type="GO" id="GO:0006417">
    <property type="term" value="P:regulation of translation"/>
    <property type="evidence" value="ECO:0007669"/>
    <property type="project" value="UniProtKB-KW"/>
</dbReference>
<dbReference type="FunFam" id="1.25.10.10:FF:001713">
    <property type="entry name" value="Hsp70 nucleotide exchange factor FES1"/>
    <property type="match status" value="1"/>
</dbReference>
<dbReference type="Gene3D" id="1.25.10.10">
    <property type="entry name" value="Leucine-rich Repeat Variant"/>
    <property type="match status" value="1"/>
</dbReference>
<dbReference type="InterPro" id="IPR011989">
    <property type="entry name" value="ARM-like"/>
</dbReference>
<dbReference type="InterPro" id="IPR016024">
    <property type="entry name" value="ARM-type_fold"/>
</dbReference>
<dbReference type="InterPro" id="IPR050693">
    <property type="entry name" value="Hsp70_NEF-Inhibitors"/>
</dbReference>
<dbReference type="InterPro" id="IPR013918">
    <property type="entry name" value="Nucleotide_exch_fac_Fes1"/>
</dbReference>
<dbReference type="PANTHER" id="PTHR19316:SF18">
    <property type="entry name" value="HSP70-BINDING PROTEIN 1"/>
    <property type="match status" value="1"/>
</dbReference>
<dbReference type="PANTHER" id="PTHR19316">
    <property type="entry name" value="PROTEIN FOLDING REGULATOR"/>
    <property type="match status" value="1"/>
</dbReference>
<dbReference type="Pfam" id="PF08609">
    <property type="entry name" value="Fes1"/>
    <property type="match status" value="1"/>
</dbReference>
<dbReference type="SUPFAM" id="SSF48371">
    <property type="entry name" value="ARM repeat"/>
    <property type="match status" value="1"/>
</dbReference>
<name>FES1_CANAL</name>
<evidence type="ECO:0000250" key="1"/>
<evidence type="ECO:0000305" key="2"/>
<keyword id="KW-0963">Cytoplasm</keyword>
<keyword id="KW-1185">Reference proteome</keyword>
<keyword id="KW-0677">Repeat</keyword>
<keyword id="KW-0810">Translation regulation</keyword>
<sequence length="284" mass="31833">MEKLLHWTIAQQSGDKAALEKIGEPDQKALNQLFGGPDEATLMKESIKVVESTDVSLEDKEIALENFEMLIENLDNANNIGNLKLWNPLIDILAKEDTPVELKVLICGIIGTAVQNNPKSQEDFNETEGLSELIELAQDDKKFELQSKALFAISSFIRNFQPGYAKFEKLQGLKLINFDNKNNKYQLRILSLISSILSNGLDDSLKAQFKEAKLPHYLASVLNEDSNTSLVDKSLNIVSQLNQLNYEFSLEEKYEINRGIQVVEGLSEKLNIDDLNNAKQATSS</sequence>
<organism>
    <name type="scientific">Candida albicans (strain SC5314 / ATCC MYA-2876)</name>
    <name type="common">Yeast</name>
    <dbReference type="NCBI Taxonomy" id="237561"/>
    <lineage>
        <taxon>Eukaryota</taxon>
        <taxon>Fungi</taxon>
        <taxon>Dikarya</taxon>
        <taxon>Ascomycota</taxon>
        <taxon>Saccharomycotina</taxon>
        <taxon>Pichiomycetes</taxon>
        <taxon>Debaryomycetaceae</taxon>
        <taxon>Candida/Lodderomyces clade</taxon>
        <taxon>Candida</taxon>
    </lineage>
</organism>
<feature type="chain" id="PRO_0000285388" description="Hsp70 nucleotide exchange factor FES1">
    <location>
        <begin position="1"/>
        <end position="284"/>
    </location>
</feature>
<feature type="repeat" description="ARM 1">
    <location>
        <begin position="74"/>
        <end position="115"/>
    </location>
</feature>
<feature type="repeat" description="ARM 2">
    <location>
        <begin position="118"/>
        <end position="158"/>
    </location>
</feature>
<feature type="repeat" description="ARM 3">
    <location>
        <begin position="202"/>
        <end position="243"/>
    </location>
</feature>
<gene>
    <name type="primary">FES1</name>
    <name type="ordered locus">CAALFM_C600760WA</name>
    <name type="ORF">CaO19.11133</name>
    <name type="ORF">CaO19.3649</name>
</gene>
<protein>
    <recommendedName>
        <fullName>Hsp70 nucleotide exchange factor FES1</fullName>
    </recommendedName>
</protein>
<comment type="function">
    <text evidence="1">Functions as a nucleotide exchange factor (NEF) for Hsp70 chaperones which accelerates the release of ADP. Required for fully efficient Hsp70-mediated folding of proteins (By similarity).</text>
</comment>
<comment type="subcellular location">
    <subcellularLocation>
        <location evidence="1">Cytoplasm</location>
    </subcellularLocation>
</comment>
<comment type="similarity">
    <text evidence="2">Belongs to the FES1 family.</text>
</comment>
<reference key="1">
    <citation type="journal article" date="2004" name="Proc. Natl. Acad. Sci. U.S.A.">
        <title>The diploid genome sequence of Candida albicans.</title>
        <authorList>
            <person name="Jones T."/>
            <person name="Federspiel N.A."/>
            <person name="Chibana H."/>
            <person name="Dungan J."/>
            <person name="Kalman S."/>
            <person name="Magee B.B."/>
            <person name="Newport G."/>
            <person name="Thorstenson Y.R."/>
            <person name="Agabian N."/>
            <person name="Magee P.T."/>
            <person name="Davis R.W."/>
            <person name="Scherer S."/>
        </authorList>
    </citation>
    <scope>NUCLEOTIDE SEQUENCE [LARGE SCALE GENOMIC DNA]</scope>
    <source>
        <strain>SC5314 / ATCC MYA-2876</strain>
    </source>
</reference>
<reference key="2">
    <citation type="journal article" date="2007" name="Genome Biol.">
        <title>Assembly of the Candida albicans genome into sixteen supercontigs aligned on the eight chromosomes.</title>
        <authorList>
            <person name="van het Hoog M."/>
            <person name="Rast T.J."/>
            <person name="Martchenko M."/>
            <person name="Grindle S."/>
            <person name="Dignard D."/>
            <person name="Hogues H."/>
            <person name="Cuomo C."/>
            <person name="Berriman M."/>
            <person name="Scherer S."/>
            <person name="Magee B.B."/>
            <person name="Whiteway M."/>
            <person name="Chibana H."/>
            <person name="Nantel A."/>
            <person name="Magee P.T."/>
        </authorList>
    </citation>
    <scope>GENOME REANNOTATION</scope>
    <source>
        <strain>SC5314 / ATCC MYA-2876</strain>
    </source>
</reference>
<reference key="3">
    <citation type="journal article" date="2013" name="Genome Biol.">
        <title>Assembly of a phased diploid Candida albicans genome facilitates allele-specific measurements and provides a simple model for repeat and indel structure.</title>
        <authorList>
            <person name="Muzzey D."/>
            <person name="Schwartz K."/>
            <person name="Weissman J.S."/>
            <person name="Sherlock G."/>
        </authorList>
    </citation>
    <scope>NUCLEOTIDE SEQUENCE [LARGE SCALE GENOMIC DNA]</scope>
    <scope>GENOME REANNOTATION</scope>
    <source>
        <strain>SC5314 / ATCC MYA-2876</strain>
    </source>
</reference>
<accession>Q59NN8</accession>
<accession>A0A1D8PPG6</accession>
<accession>Q59NT5</accession>
<proteinExistence type="inferred from homology"/>